<name>NU4M_ANOAR</name>
<dbReference type="EC" id="7.1.1.2"/>
<dbReference type="EMBL" id="U10123">
    <property type="protein sequence ID" value="AAB51640.1"/>
    <property type="molecule type" value="Genomic_DNA"/>
</dbReference>
<dbReference type="EMBL" id="U10124">
    <property type="protein sequence ID" value="AAB51630.1"/>
    <property type="molecule type" value="Genomic_DNA"/>
</dbReference>
<dbReference type="EMBL" id="U10125">
    <property type="protein sequence ID" value="AAB51632.1"/>
    <property type="molecule type" value="Genomic_DNA"/>
</dbReference>
<dbReference type="EMBL" id="U10126">
    <property type="protein sequence ID" value="AAB51634.1"/>
    <property type="molecule type" value="Genomic_DNA"/>
</dbReference>
<dbReference type="EMBL" id="U10129">
    <property type="protein sequence ID" value="AAB51642.1"/>
    <property type="molecule type" value="Genomic_DNA"/>
</dbReference>
<dbReference type="EMBL" id="U10131">
    <property type="protein sequence ID" value="AAB51646.1"/>
    <property type="molecule type" value="Genomic_DNA"/>
</dbReference>
<dbReference type="EMBL" id="U10132">
    <property type="protein sequence ID" value="AAB51648.1"/>
    <property type="molecule type" value="Genomic_DNA"/>
</dbReference>
<dbReference type="EMBL" id="U10133">
    <property type="protein sequence ID" value="AAB51650.1"/>
    <property type="molecule type" value="Genomic_DNA"/>
</dbReference>
<dbReference type="PIR" id="T30245">
    <property type="entry name" value="T30245"/>
</dbReference>
<dbReference type="SMR" id="P51898"/>
<dbReference type="VEuPathDB" id="VectorBase:AARA21_005044"/>
<dbReference type="Proteomes" id="UP000075840">
    <property type="component" value="Unassembled WGS sequence"/>
</dbReference>
<dbReference type="GO" id="GO:0031966">
    <property type="term" value="C:mitochondrial membrane"/>
    <property type="evidence" value="ECO:0007669"/>
    <property type="project" value="UniProtKB-SubCell"/>
</dbReference>
<dbReference type="GO" id="GO:0008137">
    <property type="term" value="F:NADH dehydrogenase (ubiquinone) activity"/>
    <property type="evidence" value="ECO:0007669"/>
    <property type="project" value="UniProtKB-EC"/>
</dbReference>
<dbReference type="GO" id="GO:0048039">
    <property type="term" value="F:ubiquinone binding"/>
    <property type="evidence" value="ECO:0007669"/>
    <property type="project" value="TreeGrafter"/>
</dbReference>
<dbReference type="GO" id="GO:0042773">
    <property type="term" value="P:ATP synthesis coupled electron transport"/>
    <property type="evidence" value="ECO:0007669"/>
    <property type="project" value="InterPro"/>
</dbReference>
<dbReference type="GO" id="GO:0015990">
    <property type="term" value="P:electron transport coupled proton transport"/>
    <property type="evidence" value="ECO:0007669"/>
    <property type="project" value="TreeGrafter"/>
</dbReference>
<dbReference type="InterPro" id="IPR003918">
    <property type="entry name" value="NADH_UbQ_OxRdtase"/>
</dbReference>
<dbReference type="InterPro" id="IPR001750">
    <property type="entry name" value="ND/Mrp_TM"/>
</dbReference>
<dbReference type="PANTHER" id="PTHR43507">
    <property type="entry name" value="NADH-UBIQUINONE OXIDOREDUCTASE CHAIN 4"/>
    <property type="match status" value="1"/>
</dbReference>
<dbReference type="PANTHER" id="PTHR43507:SF20">
    <property type="entry name" value="NADH-UBIQUINONE OXIDOREDUCTASE CHAIN 4"/>
    <property type="match status" value="1"/>
</dbReference>
<dbReference type="Pfam" id="PF00361">
    <property type="entry name" value="Proton_antipo_M"/>
    <property type="match status" value="1"/>
</dbReference>
<dbReference type="PRINTS" id="PR01437">
    <property type="entry name" value="NUOXDRDTASE4"/>
</dbReference>
<accession>P51898</accession>
<geneLocation type="mitochondrion"/>
<keyword id="KW-0249">Electron transport</keyword>
<keyword id="KW-0472">Membrane</keyword>
<keyword id="KW-0496">Mitochondrion</keyword>
<keyword id="KW-0520">NAD</keyword>
<keyword id="KW-0679">Respiratory chain</keyword>
<keyword id="KW-1278">Translocase</keyword>
<keyword id="KW-0812">Transmembrane</keyword>
<keyword id="KW-1133">Transmembrane helix</keyword>
<keyword id="KW-0813">Transport</keyword>
<keyword id="KW-0830">Ubiquinone</keyword>
<gene>
    <name type="primary">ND4</name>
</gene>
<feature type="chain" id="PRO_0000117885" description="NADH-ubiquinone oxidoreductase chain 4">
    <location>
        <begin position="1" status="less than"/>
        <end position="221"/>
    </location>
</feature>
<feature type="transmembrane region" description="Helical" evidence="2">
    <location>
        <begin position="20"/>
        <end position="40"/>
    </location>
</feature>
<feature type="transmembrane region" description="Helical" evidence="2">
    <location>
        <begin position="45"/>
        <end position="65"/>
    </location>
</feature>
<feature type="transmembrane region" description="Helical" evidence="2">
    <location>
        <begin position="78"/>
        <end position="98"/>
    </location>
</feature>
<feature type="transmembrane region" description="Helical" evidence="2">
    <location>
        <begin position="121"/>
        <end position="141"/>
    </location>
</feature>
<feature type="transmembrane region" description="Helical" evidence="2">
    <location>
        <begin position="170"/>
        <end position="190"/>
    </location>
</feature>
<feature type="sequence variant" description="In strain: Arzag.">
    <original>S</original>
    <variation>N</variation>
    <location>
        <position position="221"/>
    </location>
</feature>
<feature type="non-terminal residue">
    <location>
        <position position="1"/>
    </location>
</feature>
<evidence type="ECO:0000250" key="1"/>
<evidence type="ECO:0000255" key="2"/>
<evidence type="ECO:0000305" key="3"/>
<proteinExistence type="inferred from homology"/>
<protein>
    <recommendedName>
        <fullName>NADH-ubiquinone oxidoreductase chain 4</fullName>
        <ecNumber>7.1.1.2</ecNumber>
    </recommendedName>
    <alternativeName>
        <fullName>NADH dehydrogenase subunit 4</fullName>
    </alternativeName>
</protein>
<sequence>SLVGGVLISLVCLRQTDLKALIAYSSVAHMGIVLSGLLTMTYWGLTGSYALMIAHGLCSSGLFCLANISYERMGSRSLLINKGLLNFMPTLSLWWFLLCSGNMAAPPTLNLLGEISLLNSIVSWSWITMIMLSFLSFFSAAYSLYLFAYSQHGKIYSGVYFFSVGTTREFLLLMLHWLPLNLLILKSNFCMLWIYLNSLKKMLICGVNDMKLFILDRELFS</sequence>
<comment type="function">
    <text evidence="1">Core subunit of the mitochondrial membrane respiratory chain NADH dehydrogenase (Complex I) that is believed to belong to the minimal assembly required for catalysis. Complex I functions in the transfer of electrons from NADH to the respiratory chain. The immediate electron acceptor for the enzyme is believed to be ubiquinone (By similarity).</text>
</comment>
<comment type="catalytic activity">
    <reaction>
        <text>a ubiquinone + NADH + 5 H(+)(in) = a ubiquinol + NAD(+) + 4 H(+)(out)</text>
        <dbReference type="Rhea" id="RHEA:29091"/>
        <dbReference type="Rhea" id="RHEA-COMP:9565"/>
        <dbReference type="Rhea" id="RHEA-COMP:9566"/>
        <dbReference type="ChEBI" id="CHEBI:15378"/>
        <dbReference type="ChEBI" id="CHEBI:16389"/>
        <dbReference type="ChEBI" id="CHEBI:17976"/>
        <dbReference type="ChEBI" id="CHEBI:57540"/>
        <dbReference type="ChEBI" id="CHEBI:57945"/>
        <dbReference type="EC" id="7.1.1.2"/>
    </reaction>
</comment>
<comment type="subcellular location">
    <subcellularLocation>
        <location evidence="1">Mitochondrion membrane</location>
        <topology evidence="1">Multi-pass membrane protein</topology>
    </subcellularLocation>
</comment>
<comment type="similarity">
    <text evidence="3">Belongs to the complex I subunit 4 family.</text>
</comment>
<reference key="1">
    <citation type="journal article" date="1994" name="Proc. Natl. Acad. Sci. U.S.A.">
        <title>Molecular phylogeny of the Anopheles gambiae complex suggests genetic introgression between principal malaria vectors.</title>
        <authorList>
            <person name="Besansky N.J."/>
            <person name="Powell J.R."/>
            <person name="Caccone A."/>
            <person name="Hamm D.M."/>
            <person name="Scott J.A."/>
            <person name="Collins F.H."/>
        </authorList>
    </citation>
    <scope>NUCLEOTIDE SEQUENCE [GENOMIC DNA]</scope>
    <source>
        <strain>Arzag</strain>
        <strain>BAL</strain>
        <strain>Brefet</strain>
        <strain>Chil</strain>
        <strain>G3</strain>
        <strain>GMAL</strain>
        <strain>Squad</strain>
        <strain>Zulu</strain>
    </source>
</reference>
<organism>
    <name type="scientific">Anopheles arabiensis</name>
    <name type="common">Mosquito</name>
    <dbReference type="NCBI Taxonomy" id="7173"/>
    <lineage>
        <taxon>Eukaryota</taxon>
        <taxon>Metazoa</taxon>
        <taxon>Ecdysozoa</taxon>
        <taxon>Arthropoda</taxon>
        <taxon>Hexapoda</taxon>
        <taxon>Insecta</taxon>
        <taxon>Pterygota</taxon>
        <taxon>Neoptera</taxon>
        <taxon>Endopterygota</taxon>
        <taxon>Diptera</taxon>
        <taxon>Nematocera</taxon>
        <taxon>Culicoidea</taxon>
        <taxon>Culicidae</taxon>
        <taxon>Anophelinae</taxon>
        <taxon>Anopheles</taxon>
    </lineage>
</organism>